<proteinExistence type="evidence at protein level"/>
<sequence length="11" mass="1158">NIALGQDQSGR</sequence>
<feature type="peptide" id="PRO_0000461739" description="Cryptide Pep-4" evidence="1">
    <location>
        <begin position="1"/>
        <end position="11"/>
    </location>
</feature>
<feature type="modified residue" description="Arginine amide" evidence="1">
    <location>
        <position position="11"/>
    </location>
</feature>
<accession>P0DRE9</accession>
<organism>
    <name type="scientific">Tityus obscurus</name>
    <name type="common">Amazonian scorpion</name>
    <name type="synonym">Tityus cambridgei</name>
    <dbReference type="NCBI Taxonomy" id="1221240"/>
    <lineage>
        <taxon>Eukaryota</taxon>
        <taxon>Metazoa</taxon>
        <taxon>Ecdysozoa</taxon>
        <taxon>Arthropoda</taxon>
        <taxon>Chelicerata</taxon>
        <taxon>Arachnida</taxon>
        <taxon>Scorpiones</taxon>
        <taxon>Buthida</taxon>
        <taxon>Buthoidea</taxon>
        <taxon>Buthidae</taxon>
        <taxon>Tityus</taxon>
    </lineage>
</organism>
<keyword id="KW-0027">Amidation</keyword>
<keyword id="KW-0204">Cytolysis</keyword>
<keyword id="KW-0903">Direct protein sequencing</keyword>
<keyword id="KW-0964">Secreted</keyword>
<evidence type="ECO:0000269" key="1">
    <source>
    </source>
</evidence>
<evidence type="ECO:0000303" key="2">
    <source>
    </source>
</evidence>
<evidence type="ECO:0000305" key="3"/>
<evidence type="ECO:0000305" key="4">
    <source>
    </source>
</evidence>
<comment type="function">
    <text evidence="1">Presents weak lactate dehydrogenase (LDH) release from mast cells. Does not induce hemolytic activity, mast cell degranulation, and antimicrobial effects. In vivo, injection into mice causes moderate edema formation, but induces very weak or no change in nociceptive sensibility. It also causes an alteration in rearing (standing on hind limbs), but does not impact locomotion.</text>
</comment>
<comment type="subcellular location">
    <subcellularLocation>
        <location evidence="1">Secreted</location>
    </subcellularLocation>
</comment>
<comment type="tissue specificity">
    <text evidence="4">Expressed by the venom gland.</text>
</comment>
<comment type="miscellaneous">
    <text evidence="3">The primary structure of this cryptide Pep-4 is identical to that of cryptide Pep-4 from Tityus serrulatus (AC P85840).</text>
</comment>
<name>CRY4_TITOB</name>
<reference key="1">
    <citation type="journal article" date="2018" name="J. Proteomics">
        <title>Profiling the short, linear, non-disulfide bond-containing peptidome from the venom of the scorpion Tityus obscurus.</title>
        <authorList>
            <person name="Dias N.B."/>
            <person name="de Souza B.M."/>
            <person name="Cocchi F.K."/>
            <person name="Chalkidis H.M."/>
            <person name="Dorce V.A.C."/>
            <person name="Palma M.S."/>
        </authorList>
    </citation>
    <scope>PROTEIN SEQUENCE</scope>
    <scope>IDENTIFICATION BY MASS SPECTROMETRY</scope>
    <scope>SUBCELLULAR LOCATION</scope>
    <scope>SYNTHESIS</scope>
    <scope>FUNCTION</scope>
    <scope>BIOASSAY</scope>
    <scope>AMIDATION AT ARG-11</scope>
    <source>
        <tissue>Venom</tissue>
    </source>
</reference>
<dbReference type="GO" id="GO:0005576">
    <property type="term" value="C:extracellular region"/>
    <property type="evidence" value="ECO:0007669"/>
    <property type="project" value="UniProtKB-SubCell"/>
</dbReference>
<dbReference type="GO" id="GO:0031640">
    <property type="term" value="P:killing of cells of another organism"/>
    <property type="evidence" value="ECO:0007669"/>
    <property type="project" value="UniProtKB-KW"/>
</dbReference>
<protein>
    <recommendedName>
        <fullName evidence="2">Cryptide Pep-4</fullName>
    </recommendedName>
</protein>